<reference key="1">
    <citation type="journal article" date="2010" name="Stand. Genomic Sci.">
        <title>Complete genome sequence of Acidaminococcus fermentans type strain (VR4).</title>
        <authorList>
            <person name="Chang Y.J."/>
            <person name="Pukall R."/>
            <person name="Saunders E."/>
            <person name="Lapidus A."/>
            <person name="Copeland A."/>
            <person name="Nolan M."/>
            <person name="Glavina Del Rio T."/>
            <person name="Lucas S."/>
            <person name="Chen F."/>
            <person name="Tice H."/>
            <person name="Cheng J.F."/>
            <person name="Han C."/>
            <person name="Detter J.C."/>
            <person name="Bruce D."/>
            <person name="Goodwin L."/>
            <person name="Pitluck S."/>
            <person name="Mikhailova N."/>
            <person name="Liolios K."/>
            <person name="Pati A."/>
            <person name="Ivanova N."/>
            <person name="Mavromatis K."/>
            <person name="Chen A."/>
            <person name="Palaniappan K."/>
            <person name="Land M."/>
            <person name="Hauser L."/>
            <person name="Jeffries C.D."/>
            <person name="Brettin T."/>
            <person name="Rohde M."/>
            <person name="Goker M."/>
            <person name="Bristow J."/>
            <person name="Eisen J.A."/>
            <person name="Markowitz V."/>
            <person name="Hugenholtz P."/>
            <person name="Kyrpides N.C."/>
            <person name="Klenk H.P."/>
        </authorList>
    </citation>
    <scope>NUCLEOTIDE SEQUENCE [LARGE SCALE GENOMIC DNA]</scope>
    <source>
        <strain>ATCC 25085 / DSM 20731 / CCUG 9996 / CIP 106432 / VR4</strain>
    </source>
</reference>
<gene>
    <name evidence="1" type="primary">secF</name>
    <name type="ordered locus">Acfer_1521</name>
</gene>
<accession>D2RLC7</accession>
<proteinExistence type="inferred from homology"/>
<name>SECF_ACIFV</name>
<feature type="chain" id="PRO_0000412691" description="Protein translocase subunit SecF">
    <location>
        <begin position="1"/>
        <end position="293"/>
    </location>
</feature>
<feature type="transmembrane region" description="Helical" evidence="1">
    <location>
        <begin position="10"/>
        <end position="30"/>
    </location>
</feature>
<feature type="transmembrane region" description="Helical" evidence="1">
    <location>
        <begin position="130"/>
        <end position="150"/>
    </location>
</feature>
<feature type="transmembrane region" description="Helical" evidence="1">
    <location>
        <begin position="158"/>
        <end position="178"/>
    </location>
</feature>
<feature type="transmembrane region" description="Helical" evidence="1">
    <location>
        <begin position="185"/>
        <end position="205"/>
    </location>
</feature>
<feature type="transmembrane region" description="Helical" evidence="1">
    <location>
        <begin position="244"/>
        <end position="264"/>
    </location>
</feature>
<feature type="transmembrane region" description="Helical" evidence="1">
    <location>
        <begin position="267"/>
        <end position="287"/>
    </location>
</feature>
<keyword id="KW-1003">Cell membrane</keyword>
<keyword id="KW-0472">Membrane</keyword>
<keyword id="KW-0653">Protein transport</keyword>
<keyword id="KW-1185">Reference proteome</keyword>
<keyword id="KW-0811">Translocation</keyword>
<keyword id="KW-0812">Transmembrane</keyword>
<keyword id="KW-1133">Transmembrane helix</keyword>
<keyword id="KW-0813">Transport</keyword>
<dbReference type="EMBL" id="CP001859">
    <property type="protein sequence ID" value="ADB47879.1"/>
    <property type="molecule type" value="Genomic_DNA"/>
</dbReference>
<dbReference type="RefSeq" id="WP_012938864.1">
    <property type="nucleotide sequence ID" value="NC_013740.1"/>
</dbReference>
<dbReference type="SMR" id="D2RLC7"/>
<dbReference type="STRING" id="591001.Acfer_1521"/>
<dbReference type="GeneID" id="78335213"/>
<dbReference type="KEGG" id="afn:Acfer_1521"/>
<dbReference type="eggNOG" id="COG0341">
    <property type="taxonomic scope" value="Bacteria"/>
</dbReference>
<dbReference type="HOGENOM" id="CLU_050012_0_0_9"/>
<dbReference type="OrthoDB" id="9805019at2"/>
<dbReference type="Proteomes" id="UP000001902">
    <property type="component" value="Chromosome"/>
</dbReference>
<dbReference type="GO" id="GO:0005886">
    <property type="term" value="C:plasma membrane"/>
    <property type="evidence" value="ECO:0007669"/>
    <property type="project" value="UniProtKB-SubCell"/>
</dbReference>
<dbReference type="GO" id="GO:0015450">
    <property type="term" value="F:protein-transporting ATPase activity"/>
    <property type="evidence" value="ECO:0007669"/>
    <property type="project" value="InterPro"/>
</dbReference>
<dbReference type="GO" id="GO:0065002">
    <property type="term" value="P:intracellular protein transmembrane transport"/>
    <property type="evidence" value="ECO:0007669"/>
    <property type="project" value="UniProtKB-UniRule"/>
</dbReference>
<dbReference type="GO" id="GO:0006605">
    <property type="term" value="P:protein targeting"/>
    <property type="evidence" value="ECO:0007669"/>
    <property type="project" value="UniProtKB-UniRule"/>
</dbReference>
<dbReference type="GO" id="GO:0043952">
    <property type="term" value="P:protein transport by the Sec complex"/>
    <property type="evidence" value="ECO:0007669"/>
    <property type="project" value="UniProtKB-UniRule"/>
</dbReference>
<dbReference type="Gene3D" id="3.30.70.2040">
    <property type="match status" value="1"/>
</dbReference>
<dbReference type="Gene3D" id="1.20.1640.10">
    <property type="entry name" value="Multidrug efflux transporter AcrB transmembrane domain"/>
    <property type="match status" value="1"/>
</dbReference>
<dbReference type="HAMAP" id="MF_01464_B">
    <property type="entry name" value="SecF_B"/>
    <property type="match status" value="1"/>
</dbReference>
<dbReference type="InterPro" id="IPR022813">
    <property type="entry name" value="SecD/SecF_arch_bac"/>
</dbReference>
<dbReference type="InterPro" id="IPR022645">
    <property type="entry name" value="SecD/SecF_bac"/>
</dbReference>
<dbReference type="InterPro" id="IPR022646">
    <property type="entry name" value="SecD/SecF_CS"/>
</dbReference>
<dbReference type="InterPro" id="IPR048634">
    <property type="entry name" value="SecD_SecF_C"/>
</dbReference>
<dbReference type="InterPro" id="IPR055344">
    <property type="entry name" value="SecD_SecF_C_bact"/>
</dbReference>
<dbReference type="InterPro" id="IPR005665">
    <property type="entry name" value="SecF_bac"/>
</dbReference>
<dbReference type="NCBIfam" id="TIGR00916">
    <property type="entry name" value="2A0604s01"/>
    <property type="match status" value="1"/>
</dbReference>
<dbReference type="NCBIfam" id="TIGR00966">
    <property type="entry name" value="transloc_SecF"/>
    <property type="match status" value="1"/>
</dbReference>
<dbReference type="PANTHER" id="PTHR30081:SF8">
    <property type="entry name" value="PROTEIN TRANSLOCASE SUBUNIT SECF"/>
    <property type="match status" value="1"/>
</dbReference>
<dbReference type="PANTHER" id="PTHR30081">
    <property type="entry name" value="PROTEIN-EXPORT MEMBRANE PROTEIN SEC"/>
    <property type="match status" value="1"/>
</dbReference>
<dbReference type="Pfam" id="PF07549">
    <property type="entry name" value="Sec_GG"/>
    <property type="match status" value="1"/>
</dbReference>
<dbReference type="Pfam" id="PF02355">
    <property type="entry name" value="SecD_SecF_C"/>
    <property type="match status" value="1"/>
</dbReference>
<dbReference type="PRINTS" id="PR01755">
    <property type="entry name" value="SECFTRNLCASE"/>
</dbReference>
<dbReference type="SUPFAM" id="SSF82866">
    <property type="entry name" value="Multidrug efflux transporter AcrB transmembrane domain"/>
    <property type="match status" value="1"/>
</dbReference>
<organism>
    <name type="scientific">Acidaminococcus fermentans (strain ATCC 25085 / DSM 20731 / CCUG 9996 / CIP 106432 / VR4)</name>
    <dbReference type="NCBI Taxonomy" id="591001"/>
    <lineage>
        <taxon>Bacteria</taxon>
        <taxon>Bacillati</taxon>
        <taxon>Bacillota</taxon>
        <taxon>Negativicutes</taxon>
        <taxon>Acidaminococcales</taxon>
        <taxon>Acidaminococcaceae</taxon>
        <taxon>Acidaminococcus</taxon>
    </lineage>
</organism>
<protein>
    <recommendedName>
        <fullName>Protein translocase subunit SecF</fullName>
    </recommendedName>
</protein>
<sequence length="293" mass="32373">MKKFSIVKHARIFFSITAVVLIVGIVSMFARGFNLGIDFTGGSILDIKFDQPVTVAQVRTVLSDHQLGSSVIQLGSSDQQVESSQSVLIRTGLISDSQRVDVMNDLSNRLGHNEVLRVENVGATVGGDLVKSAVGAVVLSWVLMIIYITIRFELRFALAAIVALIIDVMVTLTWFSVLHLEIDSSFVAALLTVVGYSVNGTIVVFDRIRENLHTHRRNESMGDLVDASIWQTMTRSVYTTLTTLFAVVAIFLFGGETIHNFSFAMLVGFCSGFYTSTFLAGSMWLFFRKKLKR</sequence>
<comment type="function">
    <text evidence="1">Part of the Sec protein translocase complex. Interacts with the SecYEG preprotein conducting channel. SecDF uses the proton motive force (PMF) to complete protein translocation after the ATP-dependent function of SecA.</text>
</comment>
<comment type="subunit">
    <text evidence="1">Forms a complex with SecD. Part of the essential Sec protein translocation apparatus which comprises SecA, SecYEG and auxiliary proteins SecDF. Other proteins may also be involved.</text>
</comment>
<comment type="subcellular location">
    <subcellularLocation>
        <location evidence="1">Cell membrane</location>
        <topology evidence="1">Multi-pass membrane protein</topology>
    </subcellularLocation>
</comment>
<comment type="similarity">
    <text evidence="1">Belongs to the SecD/SecF family. SecF subfamily.</text>
</comment>
<evidence type="ECO:0000255" key="1">
    <source>
        <dbReference type="HAMAP-Rule" id="MF_01464"/>
    </source>
</evidence>